<dbReference type="EMBL" id="AP006716">
    <property type="protein sequence ID" value="BAE04110.1"/>
    <property type="molecule type" value="Genomic_DNA"/>
</dbReference>
<dbReference type="RefSeq" id="WP_011275124.1">
    <property type="nucleotide sequence ID" value="NC_007168.1"/>
</dbReference>
<dbReference type="SMR" id="Q4L8B5"/>
<dbReference type="KEGG" id="sha:SH0801"/>
<dbReference type="eggNOG" id="COG0051">
    <property type="taxonomic scope" value="Bacteria"/>
</dbReference>
<dbReference type="HOGENOM" id="CLU_122625_1_3_9"/>
<dbReference type="OrthoDB" id="9804464at2"/>
<dbReference type="Proteomes" id="UP000000543">
    <property type="component" value="Chromosome"/>
</dbReference>
<dbReference type="GO" id="GO:1990904">
    <property type="term" value="C:ribonucleoprotein complex"/>
    <property type="evidence" value="ECO:0007669"/>
    <property type="project" value="UniProtKB-KW"/>
</dbReference>
<dbReference type="GO" id="GO:0005840">
    <property type="term" value="C:ribosome"/>
    <property type="evidence" value="ECO:0007669"/>
    <property type="project" value="UniProtKB-KW"/>
</dbReference>
<dbReference type="GO" id="GO:0003735">
    <property type="term" value="F:structural constituent of ribosome"/>
    <property type="evidence" value="ECO:0007669"/>
    <property type="project" value="InterPro"/>
</dbReference>
<dbReference type="GO" id="GO:0000049">
    <property type="term" value="F:tRNA binding"/>
    <property type="evidence" value="ECO:0007669"/>
    <property type="project" value="UniProtKB-UniRule"/>
</dbReference>
<dbReference type="GO" id="GO:0006412">
    <property type="term" value="P:translation"/>
    <property type="evidence" value="ECO:0007669"/>
    <property type="project" value="UniProtKB-UniRule"/>
</dbReference>
<dbReference type="FunFam" id="3.30.70.600:FF:000001">
    <property type="entry name" value="30S ribosomal protein S10"/>
    <property type="match status" value="1"/>
</dbReference>
<dbReference type="Gene3D" id="3.30.70.600">
    <property type="entry name" value="Ribosomal protein S10 domain"/>
    <property type="match status" value="1"/>
</dbReference>
<dbReference type="HAMAP" id="MF_00508">
    <property type="entry name" value="Ribosomal_uS10"/>
    <property type="match status" value="1"/>
</dbReference>
<dbReference type="InterPro" id="IPR001848">
    <property type="entry name" value="Ribosomal_uS10"/>
</dbReference>
<dbReference type="InterPro" id="IPR018268">
    <property type="entry name" value="Ribosomal_uS10_CS"/>
</dbReference>
<dbReference type="InterPro" id="IPR027486">
    <property type="entry name" value="Ribosomal_uS10_dom"/>
</dbReference>
<dbReference type="InterPro" id="IPR036838">
    <property type="entry name" value="Ribosomal_uS10_dom_sf"/>
</dbReference>
<dbReference type="NCBIfam" id="NF001861">
    <property type="entry name" value="PRK00596.1"/>
    <property type="match status" value="1"/>
</dbReference>
<dbReference type="NCBIfam" id="TIGR01049">
    <property type="entry name" value="rpsJ_bact"/>
    <property type="match status" value="1"/>
</dbReference>
<dbReference type="PANTHER" id="PTHR11700">
    <property type="entry name" value="30S RIBOSOMAL PROTEIN S10 FAMILY MEMBER"/>
    <property type="match status" value="1"/>
</dbReference>
<dbReference type="Pfam" id="PF00338">
    <property type="entry name" value="Ribosomal_S10"/>
    <property type="match status" value="1"/>
</dbReference>
<dbReference type="PRINTS" id="PR00971">
    <property type="entry name" value="RIBOSOMALS10"/>
</dbReference>
<dbReference type="SMART" id="SM01403">
    <property type="entry name" value="Ribosomal_S10"/>
    <property type="match status" value="1"/>
</dbReference>
<dbReference type="SUPFAM" id="SSF54999">
    <property type="entry name" value="Ribosomal protein S10"/>
    <property type="match status" value="1"/>
</dbReference>
<dbReference type="PROSITE" id="PS00361">
    <property type="entry name" value="RIBOSOMAL_S10"/>
    <property type="match status" value="1"/>
</dbReference>
<accession>Q4L8B5</accession>
<name>RS10_STAHJ</name>
<organism>
    <name type="scientific">Staphylococcus haemolyticus (strain JCSC1435)</name>
    <dbReference type="NCBI Taxonomy" id="279808"/>
    <lineage>
        <taxon>Bacteria</taxon>
        <taxon>Bacillati</taxon>
        <taxon>Bacillota</taxon>
        <taxon>Bacilli</taxon>
        <taxon>Bacillales</taxon>
        <taxon>Staphylococcaceae</taxon>
        <taxon>Staphylococcus</taxon>
    </lineage>
</organism>
<proteinExistence type="inferred from homology"/>
<protein>
    <recommendedName>
        <fullName evidence="1">Small ribosomal subunit protein uS10</fullName>
    </recommendedName>
    <alternativeName>
        <fullName evidence="2">30S ribosomal protein S10</fullName>
    </alternativeName>
</protein>
<gene>
    <name evidence="1" type="primary">rpsJ</name>
    <name type="ordered locus">SH0801</name>
</gene>
<evidence type="ECO:0000255" key="1">
    <source>
        <dbReference type="HAMAP-Rule" id="MF_00508"/>
    </source>
</evidence>
<evidence type="ECO:0000305" key="2"/>
<feature type="chain" id="PRO_0000146602" description="Small ribosomal subunit protein uS10">
    <location>
        <begin position="1"/>
        <end position="102"/>
    </location>
</feature>
<keyword id="KW-0687">Ribonucleoprotein</keyword>
<keyword id="KW-0689">Ribosomal protein</keyword>
<sequence>MAKQKIRIRLKAYDHRVIDQSAEKIVETAKRSGAEVSGPIPLPTEKSVYTIIRAVHMYKDSREQFEQRTHKRLIDIVNPTPKTVDALMGLNLPSGVDIEIKL</sequence>
<reference key="1">
    <citation type="journal article" date="2005" name="J. Bacteriol.">
        <title>Whole-genome sequencing of Staphylococcus haemolyticus uncovers the extreme plasticity of its genome and the evolution of human-colonizing staphylococcal species.</title>
        <authorList>
            <person name="Takeuchi F."/>
            <person name="Watanabe S."/>
            <person name="Baba T."/>
            <person name="Yuzawa H."/>
            <person name="Ito T."/>
            <person name="Morimoto Y."/>
            <person name="Kuroda M."/>
            <person name="Cui L."/>
            <person name="Takahashi M."/>
            <person name="Ankai A."/>
            <person name="Baba S."/>
            <person name="Fukui S."/>
            <person name="Lee J.C."/>
            <person name="Hiramatsu K."/>
        </authorList>
    </citation>
    <scope>NUCLEOTIDE SEQUENCE [LARGE SCALE GENOMIC DNA]</scope>
    <source>
        <strain>JCSC1435</strain>
    </source>
</reference>
<comment type="function">
    <text evidence="1">Involved in the binding of tRNA to the ribosomes.</text>
</comment>
<comment type="subunit">
    <text evidence="1">Part of the 30S ribosomal subunit.</text>
</comment>
<comment type="similarity">
    <text evidence="1">Belongs to the universal ribosomal protein uS10 family.</text>
</comment>